<comment type="catalytic activity">
    <reaction evidence="1">
        <text>urea + 2 H2O + H(+) = hydrogencarbonate + 2 NH4(+)</text>
        <dbReference type="Rhea" id="RHEA:20557"/>
        <dbReference type="ChEBI" id="CHEBI:15377"/>
        <dbReference type="ChEBI" id="CHEBI:15378"/>
        <dbReference type="ChEBI" id="CHEBI:16199"/>
        <dbReference type="ChEBI" id="CHEBI:17544"/>
        <dbReference type="ChEBI" id="CHEBI:28938"/>
        <dbReference type="EC" id="3.5.1.5"/>
    </reaction>
</comment>
<comment type="pathway">
    <text evidence="1">Nitrogen metabolism; urea degradation; CO(2) and NH(3) from urea (urease route): step 1/1.</text>
</comment>
<comment type="subunit">
    <text evidence="1">Heterotrimer of UreA (gamma), UreB (beta) and UreC (alpha) subunits. Three heterotrimers associate to form the active enzyme.</text>
</comment>
<comment type="subcellular location">
    <subcellularLocation>
        <location evidence="1">Cytoplasm</location>
    </subcellularLocation>
</comment>
<comment type="similarity">
    <text evidence="1">Belongs to the urease gamma subunit family.</text>
</comment>
<organism>
    <name type="scientific">Cereibacter sphaeroides (strain ATCC 17025 / ATH 2.4.3)</name>
    <name type="common">Rhodobacter sphaeroides</name>
    <dbReference type="NCBI Taxonomy" id="349102"/>
    <lineage>
        <taxon>Bacteria</taxon>
        <taxon>Pseudomonadati</taxon>
        <taxon>Pseudomonadota</taxon>
        <taxon>Alphaproteobacteria</taxon>
        <taxon>Rhodobacterales</taxon>
        <taxon>Paracoccaceae</taxon>
        <taxon>Cereibacter</taxon>
    </lineage>
</organism>
<feature type="chain" id="PRO_1000046364" description="Urease subunit gamma">
    <location>
        <begin position="1"/>
        <end position="100"/>
    </location>
</feature>
<sequence length="100" mass="11015">MNLTPREKDKLLISLAAIVARNRLERGVRLNHPEAVALISDFVVEGAREGRSVADLMQAGAHVIRAEQCMEGVPEMLHSVQVEATFPDGTKLVTVHHPIR</sequence>
<keyword id="KW-0963">Cytoplasm</keyword>
<keyword id="KW-0378">Hydrolase</keyword>
<accession>A4WR72</accession>
<protein>
    <recommendedName>
        <fullName evidence="1">Urease subunit gamma</fullName>
        <ecNumber evidence="1">3.5.1.5</ecNumber>
    </recommendedName>
    <alternativeName>
        <fullName evidence="1">Urea amidohydrolase subunit gamma</fullName>
    </alternativeName>
</protein>
<dbReference type="EC" id="3.5.1.5" evidence="1"/>
<dbReference type="EMBL" id="CP000661">
    <property type="protein sequence ID" value="ABP69886.1"/>
    <property type="molecule type" value="Genomic_DNA"/>
</dbReference>
<dbReference type="SMR" id="A4WR72"/>
<dbReference type="STRING" id="349102.Rsph17025_0985"/>
<dbReference type="KEGG" id="rsq:Rsph17025_0985"/>
<dbReference type="eggNOG" id="COG0831">
    <property type="taxonomic scope" value="Bacteria"/>
</dbReference>
<dbReference type="HOGENOM" id="CLU_145825_1_0_5"/>
<dbReference type="BioCyc" id="RSPH349102:G1G8M-1011-MONOMER"/>
<dbReference type="UniPathway" id="UPA00258">
    <property type="reaction ID" value="UER00370"/>
</dbReference>
<dbReference type="GO" id="GO:0005737">
    <property type="term" value="C:cytoplasm"/>
    <property type="evidence" value="ECO:0007669"/>
    <property type="project" value="UniProtKB-SubCell"/>
</dbReference>
<dbReference type="GO" id="GO:0016151">
    <property type="term" value="F:nickel cation binding"/>
    <property type="evidence" value="ECO:0007669"/>
    <property type="project" value="InterPro"/>
</dbReference>
<dbReference type="GO" id="GO:0009039">
    <property type="term" value="F:urease activity"/>
    <property type="evidence" value="ECO:0007669"/>
    <property type="project" value="UniProtKB-UniRule"/>
</dbReference>
<dbReference type="GO" id="GO:0043419">
    <property type="term" value="P:urea catabolic process"/>
    <property type="evidence" value="ECO:0007669"/>
    <property type="project" value="UniProtKB-UniRule"/>
</dbReference>
<dbReference type="CDD" id="cd00390">
    <property type="entry name" value="Urease_gamma"/>
    <property type="match status" value="1"/>
</dbReference>
<dbReference type="Gene3D" id="3.30.280.10">
    <property type="entry name" value="Urease, gamma-like subunit"/>
    <property type="match status" value="1"/>
</dbReference>
<dbReference type="HAMAP" id="MF_00739">
    <property type="entry name" value="Urease_gamma"/>
    <property type="match status" value="1"/>
</dbReference>
<dbReference type="InterPro" id="IPR012010">
    <property type="entry name" value="Urease_gamma"/>
</dbReference>
<dbReference type="InterPro" id="IPR002026">
    <property type="entry name" value="Urease_gamma/gamma-beta_su"/>
</dbReference>
<dbReference type="InterPro" id="IPR036463">
    <property type="entry name" value="Urease_gamma_sf"/>
</dbReference>
<dbReference type="InterPro" id="IPR050069">
    <property type="entry name" value="Urease_subunit"/>
</dbReference>
<dbReference type="NCBIfam" id="NF009712">
    <property type="entry name" value="PRK13241.1"/>
    <property type="match status" value="1"/>
</dbReference>
<dbReference type="NCBIfam" id="TIGR00193">
    <property type="entry name" value="urease_gam"/>
    <property type="match status" value="1"/>
</dbReference>
<dbReference type="PANTHER" id="PTHR33569">
    <property type="entry name" value="UREASE"/>
    <property type="match status" value="1"/>
</dbReference>
<dbReference type="PANTHER" id="PTHR33569:SF1">
    <property type="entry name" value="UREASE"/>
    <property type="match status" value="1"/>
</dbReference>
<dbReference type="Pfam" id="PF00547">
    <property type="entry name" value="Urease_gamma"/>
    <property type="match status" value="1"/>
</dbReference>
<dbReference type="PIRSF" id="PIRSF001223">
    <property type="entry name" value="Urease_gamma"/>
    <property type="match status" value="1"/>
</dbReference>
<dbReference type="SUPFAM" id="SSF54111">
    <property type="entry name" value="Urease, gamma-subunit"/>
    <property type="match status" value="1"/>
</dbReference>
<reference key="1">
    <citation type="submission" date="2007-04" db="EMBL/GenBank/DDBJ databases">
        <title>Complete sequence of chromosome of Rhodobacter sphaeroides ATCC 17025.</title>
        <authorList>
            <consortium name="US DOE Joint Genome Institute"/>
            <person name="Copeland A."/>
            <person name="Lucas S."/>
            <person name="Lapidus A."/>
            <person name="Barry K."/>
            <person name="Detter J.C."/>
            <person name="Glavina del Rio T."/>
            <person name="Hammon N."/>
            <person name="Israni S."/>
            <person name="Dalin E."/>
            <person name="Tice H."/>
            <person name="Pitluck S."/>
            <person name="Chertkov O."/>
            <person name="Brettin T."/>
            <person name="Bruce D."/>
            <person name="Han C."/>
            <person name="Schmutz J."/>
            <person name="Larimer F."/>
            <person name="Land M."/>
            <person name="Hauser L."/>
            <person name="Kyrpides N."/>
            <person name="Kim E."/>
            <person name="Richardson P."/>
            <person name="Mackenzie C."/>
            <person name="Choudhary M."/>
            <person name="Donohue T.J."/>
            <person name="Kaplan S."/>
        </authorList>
    </citation>
    <scope>NUCLEOTIDE SEQUENCE [LARGE SCALE GENOMIC DNA]</scope>
    <source>
        <strain>ATCC 17025 / ATH 2.4.3</strain>
    </source>
</reference>
<evidence type="ECO:0000255" key="1">
    <source>
        <dbReference type="HAMAP-Rule" id="MF_00739"/>
    </source>
</evidence>
<gene>
    <name evidence="1" type="primary">ureA</name>
    <name type="ordered locus">Rsph17025_0985</name>
</gene>
<name>URE3_CERS5</name>
<proteinExistence type="inferred from homology"/>